<accession>Q0P6H9</accession>
<accession>Q6I9Y5</accession>
<accession>Q9H5J6</accession>
<organism>
    <name type="scientific">Homo sapiens</name>
    <name type="common">Human</name>
    <dbReference type="NCBI Taxonomy" id="9606"/>
    <lineage>
        <taxon>Eukaryota</taxon>
        <taxon>Metazoa</taxon>
        <taxon>Chordata</taxon>
        <taxon>Craniata</taxon>
        <taxon>Vertebrata</taxon>
        <taxon>Euteleostomi</taxon>
        <taxon>Mammalia</taxon>
        <taxon>Eutheria</taxon>
        <taxon>Euarchontoglires</taxon>
        <taxon>Primates</taxon>
        <taxon>Haplorrhini</taxon>
        <taxon>Catarrhini</taxon>
        <taxon>Hominidae</taxon>
        <taxon>Homo</taxon>
    </lineage>
</organism>
<comment type="interaction">
    <interactant intactId="EBI-719020">
        <id>Q0P6H9</id>
    </interactant>
    <interactant intactId="EBI-1994109">
        <id>Q8TAT6</id>
        <label>NPLOC4</label>
    </interactant>
    <organismsDiffer>false</organismsDiffer>
    <experiments>2</experiments>
</comment>
<comment type="subcellular location">
    <subcellularLocation>
        <location evidence="3">Membrane</location>
        <topology evidence="3">Multi-pass membrane protein</topology>
    </subcellularLocation>
</comment>
<comment type="sequence caution" evidence="3">
    <conflict type="erroneous initiation">
        <sequence resource="EMBL-CDS" id="BAB15630"/>
    </conflict>
</comment>
<proteinExistence type="evidence at protein level"/>
<feature type="chain" id="PRO_0000254136" description="Transmembrane protein 62">
    <location>
        <begin position="1"/>
        <end position="643"/>
    </location>
</feature>
<feature type="transmembrane region" description="Helical" evidence="1">
    <location>
        <begin position="3"/>
        <end position="23"/>
    </location>
</feature>
<feature type="transmembrane region" description="Helical" evidence="1">
    <location>
        <begin position="431"/>
        <end position="451"/>
    </location>
</feature>
<feature type="transmembrane region" description="Helical" evidence="1">
    <location>
        <begin position="481"/>
        <end position="501"/>
    </location>
</feature>
<feature type="transmembrane region" description="Helical" evidence="1">
    <location>
        <begin position="527"/>
        <end position="547"/>
    </location>
</feature>
<feature type="transmembrane region" description="Helical" evidence="1">
    <location>
        <begin position="572"/>
        <end position="592"/>
    </location>
</feature>
<feature type="transmembrane region" description="Helical" evidence="1">
    <location>
        <begin position="599"/>
        <end position="619"/>
    </location>
</feature>
<feature type="glycosylation site" description="N-linked (GlcNAc...) asparagine" evidence="2">
    <location>
        <position position="180"/>
    </location>
</feature>
<feature type="glycosylation site" description="N-linked (GlcNAc...) asparagine" evidence="1">
    <location>
        <position position="467"/>
    </location>
</feature>
<feature type="glycosylation site" description="N-linked (GlcNAc...) asparagine" evidence="1">
    <location>
        <position position="626"/>
    </location>
</feature>
<feature type="sequence conflict" description="In Ref. 2; BAB15630." evidence="3" ref="2">
    <original>T</original>
    <variation>A</variation>
    <location>
        <position position="427"/>
    </location>
</feature>
<protein>
    <recommendedName>
        <fullName>Transmembrane protein 62</fullName>
    </recommendedName>
</protein>
<sequence length="643" mass="73133">MAAVLALRVVAGLAAAALVAMLLEHYGLAGQPSPLPRPAPPRRPHPAPGPGDSNIFWGLQISDIHLSRFRDPGRAVDLEKFCSETIDIIQPALVLATGDLTDAKTKEQLGSRQHEVEWQTYQGILKKTRVMEKTKWLDIKGNHDAFNIPSLDSIKNYYRKYSAVRRDGSFHYVHSTPFGNYSFICVDATVNPGPKRPYNFFGILDKKKMEELLLLAKESSRSNHTIWFGHFTTSTILSPSPGIRSIMSSAIAYLCGHLHTLGGLMPVLHTRHFQGTLELEVGDWKDNRRYRIFAFDHDLFSFADLIFGKWPVVLITNPKSLLYSCGEHEPLERLLHSTHIRVLAFSLSSITSVTVKIDGVHLGQAVHVSGPIFVLKWNPRNYSSGTHNIEVIVQDSAGRSKSVHHIFSVQENNHLSFDPLASFILRTDHYIMARVLFVLIVLSQLTILIIFRYRGYPELKEPSGFINLTSFSLHVLSKINIFYYSVLLLTLYTVLGPWFFGEIIDGKFGCCFSFGIFVNGHFLQGSITFIIGILQLAFFNIPLMAYMCWSLLQRCFGHNFRSHLHQRKYLKIMPVHLLMLLLYIWQVYSCYFLYATYGTLAFLFSPLRTWLTLLTPVLIRYVWTLNSTKFGIFMVQLKSHLSS</sequence>
<dbReference type="EMBL" id="BC009981">
    <property type="protein sequence ID" value="AAH09981.2"/>
    <property type="molecule type" value="mRNA"/>
</dbReference>
<dbReference type="EMBL" id="AK027028">
    <property type="protein sequence ID" value="BAB15630.1"/>
    <property type="status" value="ALT_INIT"/>
    <property type="molecule type" value="mRNA"/>
</dbReference>
<dbReference type="EMBL" id="CR457370">
    <property type="protein sequence ID" value="CAG33651.1"/>
    <property type="molecule type" value="mRNA"/>
</dbReference>
<dbReference type="CCDS" id="CCDS32210.1"/>
<dbReference type="RefSeq" id="NP_079232.3">
    <property type="nucleotide sequence ID" value="NM_024956.3"/>
</dbReference>
<dbReference type="RefSeq" id="XP_011520375.1">
    <property type="nucleotide sequence ID" value="XM_011522073.1"/>
</dbReference>
<dbReference type="BioGRID" id="123075">
    <property type="interactions" value="19"/>
</dbReference>
<dbReference type="FunCoup" id="Q0P6H9">
    <property type="interactions" value="702"/>
</dbReference>
<dbReference type="IntAct" id="Q0P6H9">
    <property type="interactions" value="21"/>
</dbReference>
<dbReference type="MINT" id="Q0P6H9"/>
<dbReference type="STRING" id="9606.ENSP00000260403"/>
<dbReference type="GlyCosmos" id="Q0P6H9">
    <property type="glycosylation" value="3 sites, No reported glycans"/>
</dbReference>
<dbReference type="GlyGen" id="Q0P6H9">
    <property type="glycosylation" value="6 sites, 3 N-linked glycans (3 sites), 1 O-linked glycan (1 site)"/>
</dbReference>
<dbReference type="iPTMnet" id="Q0P6H9"/>
<dbReference type="PhosphoSitePlus" id="Q0P6H9"/>
<dbReference type="SwissPalm" id="Q0P6H9"/>
<dbReference type="BioMuta" id="TMEM62"/>
<dbReference type="DMDM" id="126256322"/>
<dbReference type="jPOST" id="Q0P6H9"/>
<dbReference type="MassIVE" id="Q0P6H9"/>
<dbReference type="PaxDb" id="9606-ENSP00000260403"/>
<dbReference type="PeptideAtlas" id="Q0P6H9"/>
<dbReference type="ProteomicsDB" id="58779"/>
<dbReference type="Antibodypedia" id="54904">
    <property type="antibodies" value="17 antibodies from 8 providers"/>
</dbReference>
<dbReference type="DNASU" id="80021"/>
<dbReference type="Ensembl" id="ENST00000260403.7">
    <property type="protein sequence ID" value="ENSP00000260403.2"/>
    <property type="gene ID" value="ENSG00000137842.7"/>
</dbReference>
<dbReference type="GeneID" id="80021"/>
<dbReference type="KEGG" id="hsa:80021"/>
<dbReference type="MANE-Select" id="ENST00000260403.7">
    <property type="protein sequence ID" value="ENSP00000260403.2"/>
    <property type="RefSeq nucleotide sequence ID" value="NM_024956.4"/>
    <property type="RefSeq protein sequence ID" value="NP_079232.3"/>
</dbReference>
<dbReference type="UCSC" id="uc001zqr.4">
    <property type="organism name" value="human"/>
</dbReference>
<dbReference type="AGR" id="HGNC:26269"/>
<dbReference type="CTD" id="80021"/>
<dbReference type="DisGeNET" id="80021"/>
<dbReference type="GeneCards" id="TMEM62"/>
<dbReference type="HGNC" id="HGNC:26269">
    <property type="gene designation" value="TMEM62"/>
</dbReference>
<dbReference type="HPA" id="ENSG00000137842">
    <property type="expression patterns" value="Low tissue specificity"/>
</dbReference>
<dbReference type="neXtProt" id="NX_Q0P6H9"/>
<dbReference type="OpenTargets" id="ENSG00000137842"/>
<dbReference type="PharmGKB" id="PA142670775"/>
<dbReference type="VEuPathDB" id="HostDB:ENSG00000137842"/>
<dbReference type="eggNOG" id="ENOG502QTBN">
    <property type="taxonomic scope" value="Eukaryota"/>
</dbReference>
<dbReference type="GeneTree" id="ENSGT00390000016216"/>
<dbReference type="InParanoid" id="Q0P6H9"/>
<dbReference type="OMA" id="VEWQTYH"/>
<dbReference type="OrthoDB" id="27234at2759"/>
<dbReference type="PAN-GO" id="Q0P6H9">
    <property type="GO annotations" value="0 GO annotations based on evolutionary models"/>
</dbReference>
<dbReference type="PhylomeDB" id="Q0P6H9"/>
<dbReference type="TreeFam" id="TF323442"/>
<dbReference type="PathwayCommons" id="Q0P6H9"/>
<dbReference type="SignaLink" id="Q0P6H9"/>
<dbReference type="BioGRID-ORCS" id="80021">
    <property type="hits" value="11 hits in 1160 CRISPR screens"/>
</dbReference>
<dbReference type="ChiTaRS" id="TMEM62">
    <property type="organism name" value="human"/>
</dbReference>
<dbReference type="GenomeRNAi" id="80021"/>
<dbReference type="Pharos" id="Q0P6H9">
    <property type="development level" value="Tdark"/>
</dbReference>
<dbReference type="PRO" id="PR:Q0P6H9"/>
<dbReference type="Proteomes" id="UP000005640">
    <property type="component" value="Chromosome 15"/>
</dbReference>
<dbReference type="RNAct" id="Q0P6H9">
    <property type="molecule type" value="protein"/>
</dbReference>
<dbReference type="Bgee" id="ENSG00000137842">
    <property type="expression patterns" value="Expressed in sural nerve and 93 other cell types or tissues"/>
</dbReference>
<dbReference type="ExpressionAtlas" id="Q0P6H9">
    <property type="expression patterns" value="baseline and differential"/>
</dbReference>
<dbReference type="GO" id="GO:0016020">
    <property type="term" value="C:membrane"/>
    <property type="evidence" value="ECO:0007669"/>
    <property type="project" value="UniProtKB-SubCell"/>
</dbReference>
<dbReference type="GO" id="GO:0016787">
    <property type="term" value="F:hydrolase activity"/>
    <property type="evidence" value="ECO:0007669"/>
    <property type="project" value="InterPro"/>
</dbReference>
<dbReference type="CDD" id="cd07401">
    <property type="entry name" value="MPP_TMEM62_N"/>
    <property type="match status" value="1"/>
</dbReference>
<dbReference type="Gene3D" id="3.60.21.10">
    <property type="match status" value="1"/>
</dbReference>
<dbReference type="InterPro" id="IPR004843">
    <property type="entry name" value="Calcineurin-like_PHP_ApaH"/>
</dbReference>
<dbReference type="InterPro" id="IPR056229">
    <property type="entry name" value="Ig_TMM62"/>
</dbReference>
<dbReference type="InterPro" id="IPR029052">
    <property type="entry name" value="Metallo-depent_PP-like"/>
</dbReference>
<dbReference type="InterPro" id="IPR041871">
    <property type="entry name" value="MPP_TMEM62"/>
</dbReference>
<dbReference type="InterPro" id="IPR056230">
    <property type="entry name" value="TMEM62_C"/>
</dbReference>
<dbReference type="PANTHER" id="PTHR14795">
    <property type="entry name" value="HELICASE RELATED"/>
    <property type="match status" value="1"/>
</dbReference>
<dbReference type="PANTHER" id="PTHR14795:SF0">
    <property type="entry name" value="TRANSMEMBRANE PROTEIN 62"/>
    <property type="match status" value="1"/>
</dbReference>
<dbReference type="Pfam" id="PF24384">
    <property type="entry name" value="Ig_TMM62"/>
    <property type="match status" value="1"/>
</dbReference>
<dbReference type="Pfam" id="PF00149">
    <property type="entry name" value="Metallophos"/>
    <property type="match status" value="1"/>
</dbReference>
<dbReference type="Pfam" id="PF24394">
    <property type="entry name" value="TMEM62_C"/>
    <property type="match status" value="1"/>
</dbReference>
<dbReference type="SUPFAM" id="SSF56300">
    <property type="entry name" value="Metallo-dependent phosphatases"/>
    <property type="match status" value="1"/>
</dbReference>
<keyword id="KW-0325">Glycoprotein</keyword>
<keyword id="KW-0472">Membrane</keyword>
<keyword id="KW-1267">Proteomics identification</keyword>
<keyword id="KW-1185">Reference proteome</keyword>
<keyword id="KW-0812">Transmembrane</keyword>
<keyword id="KW-1133">Transmembrane helix</keyword>
<evidence type="ECO:0000255" key="1"/>
<evidence type="ECO:0000269" key="2">
    <source>
    </source>
</evidence>
<evidence type="ECO:0000305" key="3"/>
<reference key="1">
    <citation type="journal article" date="2004" name="Genome Res.">
        <title>The status, quality, and expansion of the NIH full-length cDNA project: the Mammalian Gene Collection (MGC).</title>
        <authorList>
            <consortium name="The MGC Project Team"/>
        </authorList>
    </citation>
    <scope>NUCLEOTIDE SEQUENCE [LARGE SCALE MRNA]</scope>
    <source>
        <tissue>Muscle</tissue>
    </source>
</reference>
<reference key="2">
    <citation type="journal article" date="2004" name="Nat. Genet.">
        <title>Complete sequencing and characterization of 21,243 full-length human cDNAs.</title>
        <authorList>
            <person name="Ota T."/>
            <person name="Suzuki Y."/>
            <person name="Nishikawa T."/>
            <person name="Otsuki T."/>
            <person name="Sugiyama T."/>
            <person name="Irie R."/>
            <person name="Wakamatsu A."/>
            <person name="Hayashi K."/>
            <person name="Sato H."/>
            <person name="Nagai K."/>
            <person name="Kimura K."/>
            <person name="Makita H."/>
            <person name="Sekine M."/>
            <person name="Obayashi M."/>
            <person name="Nishi T."/>
            <person name="Shibahara T."/>
            <person name="Tanaka T."/>
            <person name="Ishii S."/>
            <person name="Yamamoto J."/>
            <person name="Saito K."/>
            <person name="Kawai Y."/>
            <person name="Isono Y."/>
            <person name="Nakamura Y."/>
            <person name="Nagahari K."/>
            <person name="Murakami K."/>
            <person name="Yasuda T."/>
            <person name="Iwayanagi T."/>
            <person name="Wagatsuma M."/>
            <person name="Shiratori A."/>
            <person name="Sudo H."/>
            <person name="Hosoiri T."/>
            <person name="Kaku Y."/>
            <person name="Kodaira H."/>
            <person name="Kondo H."/>
            <person name="Sugawara M."/>
            <person name="Takahashi M."/>
            <person name="Kanda K."/>
            <person name="Yokoi T."/>
            <person name="Furuya T."/>
            <person name="Kikkawa E."/>
            <person name="Omura Y."/>
            <person name="Abe K."/>
            <person name="Kamihara K."/>
            <person name="Katsuta N."/>
            <person name="Sato K."/>
            <person name="Tanikawa M."/>
            <person name="Yamazaki M."/>
            <person name="Ninomiya K."/>
            <person name="Ishibashi T."/>
            <person name="Yamashita H."/>
            <person name="Murakawa K."/>
            <person name="Fujimori K."/>
            <person name="Tanai H."/>
            <person name="Kimata M."/>
            <person name="Watanabe M."/>
            <person name="Hiraoka S."/>
            <person name="Chiba Y."/>
            <person name="Ishida S."/>
            <person name="Ono Y."/>
            <person name="Takiguchi S."/>
            <person name="Watanabe S."/>
            <person name="Yosida M."/>
            <person name="Hotuta T."/>
            <person name="Kusano J."/>
            <person name="Kanehori K."/>
            <person name="Takahashi-Fujii A."/>
            <person name="Hara H."/>
            <person name="Tanase T.-O."/>
            <person name="Nomura Y."/>
            <person name="Togiya S."/>
            <person name="Komai F."/>
            <person name="Hara R."/>
            <person name="Takeuchi K."/>
            <person name="Arita M."/>
            <person name="Imose N."/>
            <person name="Musashino K."/>
            <person name="Yuuki H."/>
            <person name="Oshima A."/>
            <person name="Sasaki N."/>
            <person name="Aotsuka S."/>
            <person name="Yoshikawa Y."/>
            <person name="Matsunawa H."/>
            <person name="Ichihara T."/>
            <person name="Shiohata N."/>
            <person name="Sano S."/>
            <person name="Moriya S."/>
            <person name="Momiyama H."/>
            <person name="Satoh N."/>
            <person name="Takami S."/>
            <person name="Terashima Y."/>
            <person name="Suzuki O."/>
            <person name="Nakagawa S."/>
            <person name="Senoh A."/>
            <person name="Mizoguchi H."/>
            <person name="Goto Y."/>
            <person name="Shimizu F."/>
            <person name="Wakebe H."/>
            <person name="Hishigaki H."/>
            <person name="Watanabe T."/>
            <person name="Sugiyama A."/>
            <person name="Takemoto M."/>
            <person name="Kawakami B."/>
            <person name="Yamazaki M."/>
            <person name="Watanabe K."/>
            <person name="Kumagai A."/>
            <person name="Itakura S."/>
            <person name="Fukuzumi Y."/>
            <person name="Fujimori Y."/>
            <person name="Komiyama M."/>
            <person name="Tashiro H."/>
            <person name="Tanigami A."/>
            <person name="Fujiwara T."/>
            <person name="Ono T."/>
            <person name="Yamada K."/>
            <person name="Fujii Y."/>
            <person name="Ozaki K."/>
            <person name="Hirao M."/>
            <person name="Ohmori Y."/>
            <person name="Kawabata A."/>
            <person name="Hikiji T."/>
            <person name="Kobatake N."/>
            <person name="Inagaki H."/>
            <person name="Ikema Y."/>
            <person name="Okamoto S."/>
            <person name="Okitani R."/>
            <person name="Kawakami T."/>
            <person name="Noguchi S."/>
            <person name="Itoh T."/>
            <person name="Shigeta K."/>
            <person name="Senba T."/>
            <person name="Matsumura K."/>
            <person name="Nakajima Y."/>
            <person name="Mizuno T."/>
            <person name="Morinaga M."/>
            <person name="Sasaki M."/>
            <person name="Togashi T."/>
            <person name="Oyama M."/>
            <person name="Hata H."/>
            <person name="Watanabe M."/>
            <person name="Komatsu T."/>
            <person name="Mizushima-Sugano J."/>
            <person name="Satoh T."/>
            <person name="Shirai Y."/>
            <person name="Takahashi Y."/>
            <person name="Nakagawa K."/>
            <person name="Okumura K."/>
            <person name="Nagase T."/>
            <person name="Nomura N."/>
            <person name="Kikuchi H."/>
            <person name="Masuho Y."/>
            <person name="Yamashita R."/>
            <person name="Nakai K."/>
            <person name="Yada T."/>
            <person name="Nakamura Y."/>
            <person name="Ohara O."/>
            <person name="Isogai T."/>
            <person name="Sugano S."/>
        </authorList>
    </citation>
    <scope>NUCLEOTIDE SEQUENCE [LARGE SCALE MRNA] OF 140-643</scope>
</reference>
<reference key="3">
    <citation type="submission" date="2004-06" db="EMBL/GenBank/DDBJ databases">
        <title>Cloning of human full open reading frames in Gateway(TM) system entry vector (pDONR201).</title>
        <authorList>
            <person name="Ebert L."/>
            <person name="Schick M."/>
            <person name="Neubert P."/>
            <person name="Schatten R."/>
            <person name="Henze S."/>
            <person name="Korn B."/>
        </authorList>
    </citation>
    <scope>NUCLEOTIDE SEQUENCE [MRNA] OF 209-643</scope>
</reference>
<reference key="4">
    <citation type="journal article" date="2009" name="J. Proteome Res.">
        <title>Glycoproteomics analysis of human liver tissue by combination of multiple enzyme digestion and hydrazide chemistry.</title>
        <authorList>
            <person name="Chen R."/>
            <person name="Jiang X."/>
            <person name="Sun D."/>
            <person name="Han G."/>
            <person name="Wang F."/>
            <person name="Ye M."/>
            <person name="Wang L."/>
            <person name="Zou H."/>
        </authorList>
    </citation>
    <scope>GLYCOSYLATION [LARGE SCALE ANALYSIS] AT ASN-180</scope>
    <source>
        <tissue>Liver</tissue>
    </source>
</reference>
<gene>
    <name type="primary">TMEM62</name>
</gene>
<name>TMM62_HUMAN</name>